<protein>
    <recommendedName>
        <fullName evidence="1">Polyamine aminopropyltransferase</fullName>
    </recommendedName>
    <alternativeName>
        <fullName evidence="1">Putrescine aminopropyltransferase</fullName>
        <shortName evidence="1">PAPT</shortName>
    </alternativeName>
    <alternativeName>
        <fullName evidence="1">Spermidine synthase</fullName>
        <shortName evidence="1">SPDS</shortName>
        <shortName evidence="1">SPDSY</shortName>
        <ecNumber evidence="1">2.5.1.16</ecNumber>
    </alternativeName>
</protein>
<organism>
    <name type="scientific">Escherichia coli O81 (strain ED1a)</name>
    <dbReference type="NCBI Taxonomy" id="585397"/>
    <lineage>
        <taxon>Bacteria</taxon>
        <taxon>Pseudomonadati</taxon>
        <taxon>Pseudomonadota</taxon>
        <taxon>Gammaproteobacteria</taxon>
        <taxon>Enterobacterales</taxon>
        <taxon>Enterobacteriaceae</taxon>
        <taxon>Escherichia</taxon>
    </lineage>
</organism>
<proteinExistence type="inferred from homology"/>
<comment type="function">
    <text evidence="1">Catalyzes the irreversible transfer of a propylamine group from the amino donor S-adenosylmethioninamine (decarboxy-AdoMet) to putrescine (1,4-diaminobutane) to yield spermidine.</text>
</comment>
<comment type="catalytic activity">
    <reaction evidence="1">
        <text>S-adenosyl 3-(methylsulfanyl)propylamine + putrescine = S-methyl-5'-thioadenosine + spermidine + H(+)</text>
        <dbReference type="Rhea" id="RHEA:12721"/>
        <dbReference type="ChEBI" id="CHEBI:15378"/>
        <dbReference type="ChEBI" id="CHEBI:17509"/>
        <dbReference type="ChEBI" id="CHEBI:57443"/>
        <dbReference type="ChEBI" id="CHEBI:57834"/>
        <dbReference type="ChEBI" id="CHEBI:326268"/>
        <dbReference type="EC" id="2.5.1.16"/>
    </reaction>
</comment>
<comment type="pathway">
    <text evidence="1">Amine and polyamine biosynthesis; spermidine biosynthesis; spermidine from putrescine: step 1/1.</text>
</comment>
<comment type="subunit">
    <text evidence="1">Homodimer or homotetramer.</text>
</comment>
<comment type="subcellular location">
    <subcellularLocation>
        <location evidence="1">Cytoplasm</location>
    </subcellularLocation>
</comment>
<comment type="similarity">
    <text evidence="1">Belongs to the spermidine/spermine synthase family.</text>
</comment>
<dbReference type="EC" id="2.5.1.16" evidence="1"/>
<dbReference type="EMBL" id="CU928162">
    <property type="protein sequence ID" value="CAR06348.1"/>
    <property type="molecule type" value="Genomic_DNA"/>
</dbReference>
<dbReference type="RefSeq" id="WP_000818409.1">
    <property type="nucleotide sequence ID" value="NC_011745.1"/>
</dbReference>
<dbReference type="SMR" id="B7MNY3"/>
<dbReference type="KEGG" id="ecq:ECED1_0125"/>
<dbReference type="HOGENOM" id="CLU_048199_0_0_6"/>
<dbReference type="UniPathway" id="UPA00248">
    <property type="reaction ID" value="UER00314"/>
</dbReference>
<dbReference type="Proteomes" id="UP000000748">
    <property type="component" value="Chromosome"/>
</dbReference>
<dbReference type="GO" id="GO:0005829">
    <property type="term" value="C:cytosol"/>
    <property type="evidence" value="ECO:0007669"/>
    <property type="project" value="TreeGrafter"/>
</dbReference>
<dbReference type="GO" id="GO:0004766">
    <property type="term" value="F:spermidine synthase activity"/>
    <property type="evidence" value="ECO:0007669"/>
    <property type="project" value="UniProtKB-UniRule"/>
</dbReference>
<dbReference type="GO" id="GO:0008295">
    <property type="term" value="P:spermidine biosynthetic process"/>
    <property type="evidence" value="ECO:0007669"/>
    <property type="project" value="UniProtKB-UniRule"/>
</dbReference>
<dbReference type="CDD" id="cd02440">
    <property type="entry name" value="AdoMet_MTases"/>
    <property type="match status" value="1"/>
</dbReference>
<dbReference type="FunFam" id="2.30.140.10:FF:000002">
    <property type="entry name" value="Polyamine aminopropyltransferase"/>
    <property type="match status" value="1"/>
</dbReference>
<dbReference type="FunFam" id="3.40.50.150:FF:000026">
    <property type="entry name" value="Polyamine aminopropyltransferase"/>
    <property type="match status" value="1"/>
</dbReference>
<dbReference type="Gene3D" id="2.30.140.10">
    <property type="entry name" value="Spermidine synthase, tetramerisation domain"/>
    <property type="match status" value="1"/>
</dbReference>
<dbReference type="Gene3D" id="3.40.50.150">
    <property type="entry name" value="Vaccinia Virus protein VP39"/>
    <property type="match status" value="1"/>
</dbReference>
<dbReference type="HAMAP" id="MF_00198">
    <property type="entry name" value="Spermidine_synth"/>
    <property type="match status" value="1"/>
</dbReference>
<dbReference type="InterPro" id="IPR030374">
    <property type="entry name" value="PABS"/>
</dbReference>
<dbReference type="InterPro" id="IPR030373">
    <property type="entry name" value="PABS_CS"/>
</dbReference>
<dbReference type="InterPro" id="IPR029063">
    <property type="entry name" value="SAM-dependent_MTases_sf"/>
</dbReference>
<dbReference type="InterPro" id="IPR001045">
    <property type="entry name" value="Spermi_synthase"/>
</dbReference>
<dbReference type="InterPro" id="IPR035246">
    <property type="entry name" value="Spermidine_synt_N"/>
</dbReference>
<dbReference type="InterPro" id="IPR037163">
    <property type="entry name" value="Spermidine_synt_N_sf"/>
</dbReference>
<dbReference type="NCBIfam" id="NF037959">
    <property type="entry name" value="MFS_SpdSyn"/>
    <property type="match status" value="1"/>
</dbReference>
<dbReference type="NCBIfam" id="NF002010">
    <property type="entry name" value="PRK00811.1"/>
    <property type="match status" value="1"/>
</dbReference>
<dbReference type="NCBIfam" id="TIGR00417">
    <property type="entry name" value="speE"/>
    <property type="match status" value="1"/>
</dbReference>
<dbReference type="PANTHER" id="PTHR11558:SF11">
    <property type="entry name" value="SPERMIDINE SYNTHASE"/>
    <property type="match status" value="1"/>
</dbReference>
<dbReference type="PANTHER" id="PTHR11558">
    <property type="entry name" value="SPERMIDINE/SPERMINE SYNTHASE"/>
    <property type="match status" value="1"/>
</dbReference>
<dbReference type="Pfam" id="PF17284">
    <property type="entry name" value="Spermine_synt_N"/>
    <property type="match status" value="1"/>
</dbReference>
<dbReference type="Pfam" id="PF01564">
    <property type="entry name" value="Spermine_synth"/>
    <property type="match status" value="1"/>
</dbReference>
<dbReference type="SUPFAM" id="SSF53335">
    <property type="entry name" value="S-adenosyl-L-methionine-dependent methyltransferases"/>
    <property type="match status" value="1"/>
</dbReference>
<dbReference type="PROSITE" id="PS01330">
    <property type="entry name" value="PABS_1"/>
    <property type="match status" value="1"/>
</dbReference>
<dbReference type="PROSITE" id="PS51006">
    <property type="entry name" value="PABS_2"/>
    <property type="match status" value="1"/>
</dbReference>
<name>SPEE_ECO81</name>
<feature type="chain" id="PRO_1000197474" description="Polyamine aminopropyltransferase">
    <location>
        <begin position="1"/>
        <end position="288"/>
    </location>
</feature>
<feature type="domain" description="PABS" evidence="1">
    <location>
        <begin position="9"/>
        <end position="238"/>
    </location>
</feature>
<feature type="active site" description="Proton acceptor" evidence="1">
    <location>
        <position position="158"/>
    </location>
</feature>
<feature type="binding site" evidence="1">
    <location>
        <position position="33"/>
    </location>
    <ligand>
        <name>S-methyl-5'-thioadenosine</name>
        <dbReference type="ChEBI" id="CHEBI:17509"/>
    </ligand>
</feature>
<feature type="binding site" evidence="1">
    <location>
        <position position="64"/>
    </location>
    <ligand>
        <name>spermidine</name>
        <dbReference type="ChEBI" id="CHEBI:57834"/>
    </ligand>
</feature>
<feature type="binding site" evidence="1">
    <location>
        <position position="88"/>
    </location>
    <ligand>
        <name>spermidine</name>
        <dbReference type="ChEBI" id="CHEBI:57834"/>
    </ligand>
</feature>
<feature type="binding site" evidence="1">
    <location>
        <position position="108"/>
    </location>
    <ligand>
        <name>S-methyl-5'-thioadenosine</name>
        <dbReference type="ChEBI" id="CHEBI:17509"/>
    </ligand>
</feature>
<feature type="binding site" evidence="1">
    <location>
        <begin position="140"/>
        <end position="141"/>
    </location>
    <ligand>
        <name>S-methyl-5'-thioadenosine</name>
        <dbReference type="ChEBI" id="CHEBI:17509"/>
    </ligand>
</feature>
<feature type="binding site" evidence="1">
    <location>
        <begin position="158"/>
        <end position="161"/>
    </location>
    <ligand>
        <name>spermidine</name>
        <dbReference type="ChEBI" id="CHEBI:57834"/>
    </ligand>
</feature>
<feature type="binding site" evidence="1">
    <location>
        <position position="165"/>
    </location>
    <ligand>
        <name>S-methyl-5'-thioadenosine</name>
        <dbReference type="ChEBI" id="CHEBI:17509"/>
    </ligand>
</feature>
<evidence type="ECO:0000255" key="1">
    <source>
        <dbReference type="HAMAP-Rule" id="MF_00198"/>
    </source>
</evidence>
<gene>
    <name evidence="1" type="primary">speE</name>
    <name type="ordered locus">ECED1_0125</name>
</gene>
<reference key="1">
    <citation type="journal article" date="2009" name="PLoS Genet.">
        <title>Organised genome dynamics in the Escherichia coli species results in highly diverse adaptive paths.</title>
        <authorList>
            <person name="Touchon M."/>
            <person name="Hoede C."/>
            <person name="Tenaillon O."/>
            <person name="Barbe V."/>
            <person name="Baeriswyl S."/>
            <person name="Bidet P."/>
            <person name="Bingen E."/>
            <person name="Bonacorsi S."/>
            <person name="Bouchier C."/>
            <person name="Bouvet O."/>
            <person name="Calteau A."/>
            <person name="Chiapello H."/>
            <person name="Clermont O."/>
            <person name="Cruveiller S."/>
            <person name="Danchin A."/>
            <person name="Diard M."/>
            <person name="Dossat C."/>
            <person name="Karoui M.E."/>
            <person name="Frapy E."/>
            <person name="Garry L."/>
            <person name="Ghigo J.M."/>
            <person name="Gilles A.M."/>
            <person name="Johnson J."/>
            <person name="Le Bouguenec C."/>
            <person name="Lescat M."/>
            <person name="Mangenot S."/>
            <person name="Martinez-Jehanne V."/>
            <person name="Matic I."/>
            <person name="Nassif X."/>
            <person name="Oztas S."/>
            <person name="Petit M.A."/>
            <person name="Pichon C."/>
            <person name="Rouy Z."/>
            <person name="Ruf C.S."/>
            <person name="Schneider D."/>
            <person name="Tourret J."/>
            <person name="Vacherie B."/>
            <person name="Vallenet D."/>
            <person name="Medigue C."/>
            <person name="Rocha E.P.C."/>
            <person name="Denamur E."/>
        </authorList>
    </citation>
    <scope>NUCLEOTIDE SEQUENCE [LARGE SCALE GENOMIC DNA]</scope>
    <source>
        <strain>ED1a</strain>
    </source>
</reference>
<accession>B7MNY3</accession>
<keyword id="KW-0963">Cytoplasm</keyword>
<keyword id="KW-0620">Polyamine biosynthesis</keyword>
<keyword id="KW-0745">Spermidine biosynthesis</keyword>
<keyword id="KW-0808">Transferase</keyword>
<sequence length="288" mass="32321">MAEKKQWHETLHDQFGQYFAVDNVLYHEKTDHQDLIIFENAAFGRVMALDGVVQTTERDEFIYHEMMTHVPLLAHGHAKHVLIIGGGDGAMLREVTRHKNVESITMVEIDAGVVSFCRQYLPNHNAGSYDDPRFKLVIDDGVNFVNQTSQTFDVIISDCTDPIGPGESLFTSAFYEGCKRCLNPAGIFVAQNGVCFLQQEEAIDSHRKLSHYFSDVGFYQAAIPTYYGGIMTFAWATDNDALRHLSTEIIQARFLASGLKCRYYNPAVHTAAFALPQYLQDALASQPS</sequence>